<name>ADO1_ORYSJ</name>
<proteinExistence type="evidence at transcript level"/>
<accession>Q5Z8K3</accession>
<accession>Q0D9X1</accession>
<feature type="chain" id="PRO_0000247308" description="Adagio-like protein 1">
    <location>
        <begin position="1"/>
        <end position="630"/>
    </location>
</feature>
<feature type="domain" description="PAS" evidence="2">
    <location>
        <begin position="48"/>
        <end position="127"/>
    </location>
</feature>
<feature type="domain" description="F-box">
    <location>
        <begin position="216"/>
        <end position="262"/>
    </location>
</feature>
<feature type="repeat" description="Kelch 1">
    <location>
        <begin position="378"/>
        <end position="428"/>
    </location>
</feature>
<feature type="repeat" description="Kelch 2">
    <location>
        <begin position="430"/>
        <end position="481"/>
    </location>
</feature>
<feature type="repeat" description="Kelch 3">
    <location>
        <begin position="483"/>
        <end position="535"/>
    </location>
</feature>
<feature type="repeat" description="Kelch 4">
    <location>
        <begin position="549"/>
        <end position="601"/>
    </location>
</feature>
<feature type="region of interest" description="Disordered" evidence="3">
    <location>
        <begin position="1"/>
        <end position="36"/>
    </location>
</feature>
<feature type="compositionally biased region" description="Acidic residues" evidence="3">
    <location>
        <begin position="16"/>
        <end position="28"/>
    </location>
</feature>
<feature type="modified residue" description="S-4a-FMN cysteine" evidence="1">
    <location>
        <position position="95"/>
    </location>
</feature>
<dbReference type="EMBL" id="AP003770">
    <property type="protein sequence ID" value="BAD53873.1"/>
    <property type="molecule type" value="Genomic_DNA"/>
</dbReference>
<dbReference type="EMBL" id="AP008212">
    <property type="protein sequence ID" value="BAF20352.1"/>
    <property type="molecule type" value="Genomic_DNA"/>
</dbReference>
<dbReference type="EMBL" id="AP014962">
    <property type="protein sequence ID" value="BAS99263.1"/>
    <property type="molecule type" value="Genomic_DNA"/>
</dbReference>
<dbReference type="EMBL" id="CM000143">
    <property type="protein sequence ID" value="EAZ38124.1"/>
    <property type="molecule type" value="Genomic_DNA"/>
</dbReference>
<dbReference type="EMBL" id="AK111850">
    <property type="status" value="NOT_ANNOTATED_CDS"/>
    <property type="molecule type" value="mRNA"/>
</dbReference>
<dbReference type="RefSeq" id="XP_015643178.1">
    <property type="nucleotide sequence ID" value="XM_015787692.1"/>
</dbReference>
<dbReference type="RefSeq" id="XP_015643179.1">
    <property type="nucleotide sequence ID" value="XM_015787693.1"/>
</dbReference>
<dbReference type="SMR" id="Q5Z8K3"/>
<dbReference type="FunCoup" id="Q5Z8K3">
    <property type="interactions" value="257"/>
</dbReference>
<dbReference type="STRING" id="39947.Q5Z8K3"/>
<dbReference type="PaxDb" id="39947-Q5Z8K3"/>
<dbReference type="EnsemblPlants" id="Os06t0694000-01">
    <property type="protein sequence ID" value="Os06t0694000-01"/>
    <property type="gene ID" value="Os06g0694000"/>
</dbReference>
<dbReference type="Gramene" id="Os06t0694000-01">
    <property type="protein sequence ID" value="Os06t0694000-01"/>
    <property type="gene ID" value="Os06g0694000"/>
</dbReference>
<dbReference type="KEGG" id="dosa:Os06g0694000"/>
<dbReference type="eggNOG" id="ENOG502QQR1">
    <property type="taxonomic scope" value="Eukaryota"/>
</dbReference>
<dbReference type="HOGENOM" id="CLU_033494_1_0_1"/>
<dbReference type="InParanoid" id="Q5Z8K3"/>
<dbReference type="OMA" id="REICGIF"/>
<dbReference type="OrthoDB" id="447251at2759"/>
<dbReference type="PlantReactome" id="R-OSA-8933811">
    <property type="pathway name" value="Circadian rhythm"/>
</dbReference>
<dbReference type="UniPathway" id="UPA00143"/>
<dbReference type="Proteomes" id="UP000000763">
    <property type="component" value="Chromosome 6"/>
</dbReference>
<dbReference type="Proteomes" id="UP000007752">
    <property type="component" value="Chromosome 6"/>
</dbReference>
<dbReference type="Proteomes" id="UP000059680">
    <property type="component" value="Chromosome 6"/>
</dbReference>
<dbReference type="GO" id="GO:0005829">
    <property type="term" value="C:cytosol"/>
    <property type="evidence" value="ECO:0000318"/>
    <property type="project" value="GO_Central"/>
</dbReference>
<dbReference type="GO" id="GO:0005634">
    <property type="term" value="C:nucleus"/>
    <property type="evidence" value="ECO:0000318"/>
    <property type="project" value="GO_Central"/>
</dbReference>
<dbReference type="GO" id="GO:0019005">
    <property type="term" value="C:SCF ubiquitin ligase complex"/>
    <property type="evidence" value="ECO:0000318"/>
    <property type="project" value="GO_Central"/>
</dbReference>
<dbReference type="GO" id="GO:0009881">
    <property type="term" value="F:photoreceptor activity"/>
    <property type="evidence" value="ECO:0007669"/>
    <property type="project" value="UniProtKB-KW"/>
</dbReference>
<dbReference type="GO" id="GO:0007623">
    <property type="term" value="P:circadian rhythm"/>
    <property type="evidence" value="ECO:0000318"/>
    <property type="project" value="GO_Central"/>
</dbReference>
<dbReference type="GO" id="GO:0016567">
    <property type="term" value="P:protein ubiquitination"/>
    <property type="evidence" value="ECO:0007669"/>
    <property type="project" value="UniProtKB-UniPathway"/>
</dbReference>
<dbReference type="GO" id="GO:0009637">
    <property type="term" value="P:response to blue light"/>
    <property type="evidence" value="ECO:0000318"/>
    <property type="project" value="GO_Central"/>
</dbReference>
<dbReference type="CDD" id="cd22154">
    <property type="entry name" value="F-box_AtADO-like"/>
    <property type="match status" value="1"/>
</dbReference>
<dbReference type="CDD" id="cd00130">
    <property type="entry name" value="PAS"/>
    <property type="match status" value="1"/>
</dbReference>
<dbReference type="FunFam" id="1.20.1280.50:FF:000021">
    <property type="entry name" value="Adagio protein 1"/>
    <property type="match status" value="1"/>
</dbReference>
<dbReference type="FunFam" id="3.30.450.20:FF:000041">
    <property type="entry name" value="Adagio protein 1"/>
    <property type="match status" value="1"/>
</dbReference>
<dbReference type="FunFam" id="2.120.10.80:FF:000005">
    <property type="entry name" value="Putative LOV domain-containing protein"/>
    <property type="match status" value="1"/>
</dbReference>
<dbReference type="FunFam" id="2.120.10.80:FF:000062">
    <property type="entry name" value="Putative LOV domain-containing protein"/>
    <property type="match status" value="1"/>
</dbReference>
<dbReference type="Gene3D" id="1.20.1280.50">
    <property type="match status" value="1"/>
</dbReference>
<dbReference type="Gene3D" id="2.120.10.80">
    <property type="entry name" value="Kelch-type beta propeller"/>
    <property type="match status" value="2"/>
</dbReference>
<dbReference type="Gene3D" id="3.30.450.20">
    <property type="entry name" value="PAS domain"/>
    <property type="match status" value="1"/>
</dbReference>
<dbReference type="InterPro" id="IPR036047">
    <property type="entry name" value="F-box-like_dom_sf"/>
</dbReference>
<dbReference type="InterPro" id="IPR001810">
    <property type="entry name" value="F-box_dom"/>
</dbReference>
<dbReference type="InterPro" id="IPR011043">
    <property type="entry name" value="Gal_Oxase/kelch_b-propeller"/>
</dbReference>
<dbReference type="InterPro" id="IPR015915">
    <property type="entry name" value="Kelch-typ_b-propeller"/>
</dbReference>
<dbReference type="InterPro" id="IPR011498">
    <property type="entry name" value="Kelch_2"/>
</dbReference>
<dbReference type="InterPro" id="IPR000014">
    <property type="entry name" value="PAS"/>
</dbReference>
<dbReference type="InterPro" id="IPR035965">
    <property type="entry name" value="PAS-like_dom_sf"/>
</dbReference>
<dbReference type="NCBIfam" id="TIGR00229">
    <property type="entry name" value="sensory_box"/>
    <property type="match status" value="1"/>
</dbReference>
<dbReference type="PANTHER" id="PTHR46175:SF5">
    <property type="entry name" value="ADAGIO PROTEIN 1"/>
    <property type="match status" value="1"/>
</dbReference>
<dbReference type="PANTHER" id="PTHR46175">
    <property type="entry name" value="BACTERIOOPSIN TRANSCRIPTIONAL ACTIVATOR"/>
    <property type="match status" value="1"/>
</dbReference>
<dbReference type="Pfam" id="PF12937">
    <property type="entry name" value="F-box-like"/>
    <property type="match status" value="1"/>
</dbReference>
<dbReference type="Pfam" id="PF07646">
    <property type="entry name" value="Kelch_2"/>
    <property type="match status" value="1"/>
</dbReference>
<dbReference type="Pfam" id="PF24681">
    <property type="entry name" value="Kelch_KLHDC2_KLHL20_DRC7"/>
    <property type="match status" value="1"/>
</dbReference>
<dbReference type="Pfam" id="PF13426">
    <property type="entry name" value="PAS_9"/>
    <property type="match status" value="1"/>
</dbReference>
<dbReference type="SUPFAM" id="SSF81383">
    <property type="entry name" value="F-box domain"/>
    <property type="match status" value="1"/>
</dbReference>
<dbReference type="SUPFAM" id="SSF50965">
    <property type="entry name" value="Galactose oxidase, central domain"/>
    <property type="match status" value="1"/>
</dbReference>
<dbReference type="SUPFAM" id="SSF55785">
    <property type="entry name" value="PYP-like sensor domain (PAS domain)"/>
    <property type="match status" value="1"/>
</dbReference>
<dbReference type="PROSITE" id="PS50112">
    <property type="entry name" value="PAS"/>
    <property type="match status" value="1"/>
</dbReference>
<reference key="1">
    <citation type="journal article" date="2005" name="Nature">
        <title>The map-based sequence of the rice genome.</title>
        <authorList>
            <consortium name="International rice genome sequencing project (IRGSP)"/>
        </authorList>
    </citation>
    <scope>NUCLEOTIDE SEQUENCE [LARGE SCALE GENOMIC DNA]</scope>
    <source>
        <strain>cv. Nipponbare</strain>
    </source>
</reference>
<reference key="2">
    <citation type="journal article" date="2008" name="Nucleic Acids Res.">
        <title>The rice annotation project database (RAP-DB): 2008 update.</title>
        <authorList>
            <consortium name="The rice annotation project (RAP)"/>
        </authorList>
    </citation>
    <scope>GENOME REANNOTATION</scope>
    <source>
        <strain>cv. Nipponbare</strain>
    </source>
</reference>
<reference key="3">
    <citation type="journal article" date="2013" name="Rice">
        <title>Improvement of the Oryza sativa Nipponbare reference genome using next generation sequence and optical map data.</title>
        <authorList>
            <person name="Kawahara Y."/>
            <person name="de la Bastide M."/>
            <person name="Hamilton J.P."/>
            <person name="Kanamori H."/>
            <person name="McCombie W.R."/>
            <person name="Ouyang S."/>
            <person name="Schwartz D.C."/>
            <person name="Tanaka T."/>
            <person name="Wu J."/>
            <person name="Zhou S."/>
            <person name="Childs K.L."/>
            <person name="Davidson R.M."/>
            <person name="Lin H."/>
            <person name="Quesada-Ocampo L."/>
            <person name="Vaillancourt B."/>
            <person name="Sakai H."/>
            <person name="Lee S.S."/>
            <person name="Kim J."/>
            <person name="Numa H."/>
            <person name="Itoh T."/>
            <person name="Buell C.R."/>
            <person name="Matsumoto T."/>
        </authorList>
    </citation>
    <scope>GENOME REANNOTATION</scope>
    <source>
        <strain>cv. Nipponbare</strain>
    </source>
</reference>
<reference key="4">
    <citation type="journal article" date="2005" name="PLoS Biol.">
        <title>The genomes of Oryza sativa: a history of duplications.</title>
        <authorList>
            <person name="Yu J."/>
            <person name="Wang J."/>
            <person name="Lin W."/>
            <person name="Li S."/>
            <person name="Li H."/>
            <person name="Zhou J."/>
            <person name="Ni P."/>
            <person name="Dong W."/>
            <person name="Hu S."/>
            <person name="Zeng C."/>
            <person name="Zhang J."/>
            <person name="Zhang Y."/>
            <person name="Li R."/>
            <person name="Xu Z."/>
            <person name="Li S."/>
            <person name="Li X."/>
            <person name="Zheng H."/>
            <person name="Cong L."/>
            <person name="Lin L."/>
            <person name="Yin J."/>
            <person name="Geng J."/>
            <person name="Li G."/>
            <person name="Shi J."/>
            <person name="Liu J."/>
            <person name="Lv H."/>
            <person name="Li J."/>
            <person name="Wang J."/>
            <person name="Deng Y."/>
            <person name="Ran L."/>
            <person name="Shi X."/>
            <person name="Wang X."/>
            <person name="Wu Q."/>
            <person name="Li C."/>
            <person name="Ren X."/>
            <person name="Wang J."/>
            <person name="Wang X."/>
            <person name="Li D."/>
            <person name="Liu D."/>
            <person name="Zhang X."/>
            <person name="Ji Z."/>
            <person name="Zhao W."/>
            <person name="Sun Y."/>
            <person name="Zhang Z."/>
            <person name="Bao J."/>
            <person name="Han Y."/>
            <person name="Dong L."/>
            <person name="Ji J."/>
            <person name="Chen P."/>
            <person name="Wu S."/>
            <person name="Liu J."/>
            <person name="Xiao Y."/>
            <person name="Bu D."/>
            <person name="Tan J."/>
            <person name="Yang L."/>
            <person name="Ye C."/>
            <person name="Zhang J."/>
            <person name="Xu J."/>
            <person name="Zhou Y."/>
            <person name="Yu Y."/>
            <person name="Zhang B."/>
            <person name="Zhuang S."/>
            <person name="Wei H."/>
            <person name="Liu B."/>
            <person name="Lei M."/>
            <person name="Yu H."/>
            <person name="Li Y."/>
            <person name="Xu H."/>
            <person name="Wei S."/>
            <person name="He X."/>
            <person name="Fang L."/>
            <person name="Zhang Z."/>
            <person name="Zhang Y."/>
            <person name="Huang X."/>
            <person name="Su Z."/>
            <person name="Tong W."/>
            <person name="Li J."/>
            <person name="Tong Z."/>
            <person name="Li S."/>
            <person name="Ye J."/>
            <person name="Wang L."/>
            <person name="Fang L."/>
            <person name="Lei T."/>
            <person name="Chen C.-S."/>
            <person name="Chen H.-C."/>
            <person name="Xu Z."/>
            <person name="Li H."/>
            <person name="Huang H."/>
            <person name="Zhang F."/>
            <person name="Xu H."/>
            <person name="Li N."/>
            <person name="Zhao C."/>
            <person name="Li S."/>
            <person name="Dong L."/>
            <person name="Huang Y."/>
            <person name="Li L."/>
            <person name="Xi Y."/>
            <person name="Qi Q."/>
            <person name="Li W."/>
            <person name="Zhang B."/>
            <person name="Hu W."/>
            <person name="Zhang Y."/>
            <person name="Tian X."/>
            <person name="Jiao Y."/>
            <person name="Liang X."/>
            <person name="Jin J."/>
            <person name="Gao L."/>
            <person name="Zheng W."/>
            <person name="Hao B."/>
            <person name="Liu S.-M."/>
            <person name="Wang W."/>
            <person name="Yuan L."/>
            <person name="Cao M."/>
            <person name="McDermott J."/>
            <person name="Samudrala R."/>
            <person name="Wang J."/>
            <person name="Wong G.K.-S."/>
            <person name="Yang H."/>
        </authorList>
    </citation>
    <scope>NUCLEOTIDE SEQUENCE [LARGE SCALE GENOMIC DNA]</scope>
    <source>
        <strain>cv. Nipponbare</strain>
    </source>
</reference>
<reference key="5">
    <citation type="journal article" date="2003" name="Science">
        <title>Collection, mapping, and annotation of over 28,000 cDNA clones from japonica rice.</title>
        <authorList>
            <consortium name="The rice full-length cDNA consortium"/>
        </authorList>
    </citation>
    <scope>NUCLEOTIDE SEQUENCE [LARGE SCALE MRNA]</scope>
    <source>
        <strain>cv. Nipponbare</strain>
    </source>
</reference>
<keyword id="KW-0090">Biological rhythms</keyword>
<keyword id="KW-0157">Chromophore</keyword>
<keyword id="KW-0285">Flavoprotein</keyword>
<keyword id="KW-0288">FMN</keyword>
<keyword id="KW-0880">Kelch repeat</keyword>
<keyword id="KW-0539">Nucleus</keyword>
<keyword id="KW-0600">Photoreceptor protein</keyword>
<keyword id="KW-0675">Receptor</keyword>
<keyword id="KW-1185">Reference proteome</keyword>
<keyword id="KW-0677">Repeat</keyword>
<keyword id="KW-0716">Sensory transduction</keyword>
<keyword id="KW-0833">Ubl conjugation pathway</keyword>
<protein>
    <recommendedName>
        <fullName>Adagio-like protein 1</fullName>
    </recommendedName>
</protein>
<sequence length="630" mass="67960">MEWDSESDGAGSIGAGEEEEEEEEEEEGGFGGGGGGGGGGGGMFSFAIEGMLRASGPCGLVVTDALEPDCPIIYVNCGFEEATGYRAEEVLGRNCRFLQCRGPFAQRRHPLVDAMVVSEIRKCIDNGTEFRGDLLNFRKDGSPLMNKLHLTPIYGDDETITHYMGIQFFTNANVDLGPLPGSLTKEPVRSTRFTPDNFFRPISTGPGQSNFCREYSSLFQLTDEVLCQSILSRLSPRDIASVSSVCRRLYLLTRNEDLWRMVCQNAWGSETTRALETVPAAKRLGWGRLARELTTLEAVAWRKLTVGGAVEPSRCNFSACAVGNRVVLFGGEGVNMQPMNDTFVLDLNASNPEWRHVNVSSAPPGRWGHTLSCLNGSLLVVFGGCGRQGLLNDVFTLDLDAKQPTWREIPGVAPPVPRSWHSSCTLDGTKLVVSGGCADSGVLLSDTYLLDVTMDKPVWREVPASWTPPSRLGHSMSVYGGRKILMFGGLAKSGPLRLRSSDVFTMDLSEEEPCWRCLTGSGMPGAGNPAGAGPPPRLDHVAVSLPGGRVLIFGGSVAGLHSASQLYLLDPTEEKPTWRILNVPGRPPRFAWGHSTCVVGGTKAIVLGGQTGEEWMLTEIHELSLASSTV</sequence>
<comment type="function">
    <text evidence="1">Component of an E3 ubiquitin ligase complex that plays a central role in blue light-dependent circadian cycles. Acts as a blue light photoreceptor, due to the presence of FMN, that mediates light-regulated protein degradation of critical clock components by targeting them to the proteasome complex (By similarity).</text>
</comment>
<comment type="pathway">
    <text>Protein modification; protein ubiquitination.</text>
</comment>
<comment type="subcellular location">
    <subcellularLocation>
        <location evidence="1">Nucleus</location>
    </subcellularLocation>
</comment>
<comment type="PTM">
    <text evidence="1">FMN binds covalently to cysteine after exposure to blue light and is reversed in the dark.</text>
</comment>
<comment type="similarity">
    <text evidence="4">Belongs to the ADAGIO family.</text>
</comment>
<comment type="sequence caution" evidence="4">
    <conflict type="frameshift">
        <sequence resource="EMBL" id="AK111850"/>
    </conflict>
</comment>
<organism>
    <name type="scientific">Oryza sativa subsp. japonica</name>
    <name type="common">Rice</name>
    <dbReference type="NCBI Taxonomy" id="39947"/>
    <lineage>
        <taxon>Eukaryota</taxon>
        <taxon>Viridiplantae</taxon>
        <taxon>Streptophyta</taxon>
        <taxon>Embryophyta</taxon>
        <taxon>Tracheophyta</taxon>
        <taxon>Spermatophyta</taxon>
        <taxon>Magnoliopsida</taxon>
        <taxon>Liliopsida</taxon>
        <taxon>Poales</taxon>
        <taxon>Poaceae</taxon>
        <taxon>BOP clade</taxon>
        <taxon>Oryzoideae</taxon>
        <taxon>Oryzeae</taxon>
        <taxon>Oryzinae</taxon>
        <taxon>Oryza</taxon>
        <taxon>Oryza sativa</taxon>
    </lineage>
</organism>
<evidence type="ECO:0000250" key="1"/>
<evidence type="ECO:0000255" key="2">
    <source>
        <dbReference type="PROSITE-ProRule" id="PRU00140"/>
    </source>
</evidence>
<evidence type="ECO:0000256" key="3">
    <source>
        <dbReference type="SAM" id="MobiDB-lite"/>
    </source>
</evidence>
<evidence type="ECO:0000305" key="4"/>
<evidence type="ECO:0000312" key="5">
    <source>
        <dbReference type="EMBL" id="EAZ38124.1"/>
    </source>
</evidence>
<gene>
    <name type="ordered locus">Os06g0694000</name>
    <name type="ordered locus">LOC_Os06g47890</name>
    <name evidence="5" type="ORF">OsJ_22473</name>
    <name type="ORF">P0550B04.22</name>
</gene>